<comment type="function">
    <text evidence="1">Usually encoded in the trnK tRNA gene intron. Probably assists in splicing its own and other chloroplast group II introns.</text>
</comment>
<comment type="subcellular location">
    <subcellularLocation>
        <location>Plastid</location>
        <location>Chloroplast</location>
    </subcellularLocation>
</comment>
<comment type="similarity">
    <text evidence="1">Belongs to the intron maturase 2 family. MatK subfamily.</text>
</comment>
<organism>
    <name type="scientific">Pinus koraiensis</name>
    <name type="common">Korean pine</name>
    <dbReference type="NCBI Taxonomy" id="88728"/>
    <lineage>
        <taxon>Eukaryota</taxon>
        <taxon>Viridiplantae</taxon>
        <taxon>Streptophyta</taxon>
        <taxon>Embryophyta</taxon>
        <taxon>Tracheophyta</taxon>
        <taxon>Spermatophyta</taxon>
        <taxon>Pinopsida</taxon>
        <taxon>Pinidae</taxon>
        <taxon>Conifers I</taxon>
        <taxon>Pinales</taxon>
        <taxon>Pinaceae</taxon>
        <taxon>Pinus</taxon>
        <taxon>Pinus subgen. Strobus</taxon>
    </lineage>
</organism>
<feature type="chain" id="PRO_0000143615" description="Maturase K">
    <location>
        <begin position="1"/>
        <end position="515"/>
    </location>
</feature>
<feature type="sequence conflict" description="In Ref. 1; BAD32752." evidence="2" ref="1">
    <original>A</original>
    <variation>G</variation>
    <location>
        <position position="477"/>
    </location>
</feature>
<name>MATK_PINKO</name>
<proteinExistence type="inferred from homology"/>
<dbReference type="EMBL" id="AB161009">
    <property type="protein sequence ID" value="BAD32752.1"/>
    <property type="molecule type" value="Genomic_DNA"/>
</dbReference>
<dbReference type="EMBL" id="AY228468">
    <property type="protein sequence ID" value="AAO74013.1"/>
    <property type="molecule type" value="Genomic_DNA"/>
</dbReference>
<dbReference type="EMBL" id="AB019834">
    <property type="protein sequence ID" value="BAA89096.1"/>
    <property type="molecule type" value="Genomic_DNA"/>
</dbReference>
<dbReference type="RefSeq" id="NP_817135.1">
    <property type="nucleotide sequence ID" value="NC_004677.2"/>
</dbReference>
<dbReference type="GeneID" id="806915"/>
<dbReference type="GO" id="GO:0009507">
    <property type="term" value="C:chloroplast"/>
    <property type="evidence" value="ECO:0007669"/>
    <property type="project" value="UniProtKB-SubCell"/>
</dbReference>
<dbReference type="GO" id="GO:0003723">
    <property type="term" value="F:RNA binding"/>
    <property type="evidence" value="ECO:0007669"/>
    <property type="project" value="UniProtKB-KW"/>
</dbReference>
<dbReference type="GO" id="GO:0006397">
    <property type="term" value="P:mRNA processing"/>
    <property type="evidence" value="ECO:0007669"/>
    <property type="project" value="UniProtKB-KW"/>
</dbReference>
<dbReference type="GO" id="GO:0008380">
    <property type="term" value="P:RNA splicing"/>
    <property type="evidence" value="ECO:0007669"/>
    <property type="project" value="UniProtKB-UniRule"/>
</dbReference>
<dbReference type="GO" id="GO:0008033">
    <property type="term" value="P:tRNA processing"/>
    <property type="evidence" value="ECO:0007669"/>
    <property type="project" value="UniProtKB-KW"/>
</dbReference>
<dbReference type="HAMAP" id="MF_01390">
    <property type="entry name" value="MatK"/>
    <property type="match status" value="1"/>
</dbReference>
<dbReference type="InterPro" id="IPR024937">
    <property type="entry name" value="Domain_X"/>
</dbReference>
<dbReference type="InterPro" id="IPR002866">
    <property type="entry name" value="Maturase_MatK"/>
</dbReference>
<dbReference type="InterPro" id="IPR024942">
    <property type="entry name" value="Maturase_MatK_N"/>
</dbReference>
<dbReference type="PANTHER" id="PTHR34811">
    <property type="entry name" value="MATURASE K"/>
    <property type="match status" value="1"/>
</dbReference>
<dbReference type="PANTHER" id="PTHR34811:SF1">
    <property type="entry name" value="MATURASE K"/>
    <property type="match status" value="1"/>
</dbReference>
<dbReference type="Pfam" id="PF01348">
    <property type="entry name" value="Intron_maturas2"/>
    <property type="match status" value="1"/>
</dbReference>
<dbReference type="Pfam" id="PF01824">
    <property type="entry name" value="MatK_N"/>
    <property type="match status" value="1"/>
</dbReference>
<sequence length="515" mass="60986">MDEFHRYGKEDNSRQQCFLYPLFFQEDLYAISHDHYLDGSSSSEPMEHLSSNDQFSFLTVKRLIGQIRQQNHSIVLFVNCAPNPLADCKKSSYSESVLEGLTLVLEVPFSIRSKYSVEGMNEWKSFRSIHSIFPFLEDKFPHSNYISDARIPYSIHPEILVRTFRRLIRDAPSLHPLRSVLYEYRNSPENLQRSIIVVPRVNTRFFLFLWNYYVYECESILFSLLKRSSHSRSLSHRPFPQRTHFHRKIKHIIIFSRRNSLKSIWLLKDPKINYVRYGERSIIAIKGTHLLVKKCRYYLLLFRQCYFHLWSEPYRVCSHQLSKNCSSSPGYFLRVRMNPLFVRTKMLDELFIADLITNEFDPIVPIVPILGLLAREKFCDVSGRPISKLSWTNLTDDDILNRFDQIWRNLFHYYSGSFGRDGLYRIKYILSLSCAKTLACKHKSTIRVVRKELGPELFQKSFSKEREFDSLPFSSKAAARSQRERIWHSDIPQINPLVNSWQKIQDLKIENLFDQ</sequence>
<evidence type="ECO:0000255" key="1">
    <source>
        <dbReference type="HAMAP-Rule" id="MF_01390"/>
    </source>
</evidence>
<evidence type="ECO:0000305" key="2"/>
<protein>
    <recommendedName>
        <fullName evidence="1">Maturase K</fullName>
    </recommendedName>
    <alternativeName>
        <fullName evidence="1">Intron maturase</fullName>
    </alternativeName>
</protein>
<accession>Q85X50</accession>
<accession>Q6BDH8</accession>
<accession>Q9TJJ5</accession>
<reference key="1">
    <citation type="submission" date="2004-01" db="EMBL/GenBank/DDBJ databases">
        <title>Phylogeny and classification of Pinus.</title>
        <authorList>
            <person name="Gernandt D."/>
            <person name="Geada-Lopez G."/>
            <person name="Liston A."/>
        </authorList>
    </citation>
    <scope>NUCLEOTIDE SEQUENCE [GENOMIC DNA]</scope>
    <source>
        <tissue>Leaf</tissue>
    </source>
</reference>
<reference key="2">
    <citation type="submission" date="2003-02" db="EMBL/GenBank/DDBJ databases">
        <title>Complete nucleotide sequence of Pinus koraiensis.</title>
        <authorList>
            <person name="Noh E.W."/>
            <person name="Lee J.S."/>
            <person name="Choi Y.I."/>
            <person name="Han M.S."/>
            <person name="Yi Y.S."/>
            <person name="Han S.U."/>
        </authorList>
    </citation>
    <scope>NUCLEOTIDE SEQUENCE [LARGE SCALE GENOMIC DNA]</scope>
    <source>
        <strain>KangWon16</strain>
    </source>
</reference>
<reference key="3">
    <citation type="journal article" date="1999" name="Am. J. Bot.">
        <title>Phylogenetic relationships of Eurasian pines (Pinus, Pinaceae) based on chloroplast rbcL, matK, rpl20-rps18 spacer, and trnV intron sequences.</title>
        <authorList>
            <person name="Wang X.R."/>
            <person name="Tsumura Y."/>
            <person name="Yoshimaru H."/>
            <person name="Nagasaka K."/>
            <person name="Szmidt A.E."/>
        </authorList>
    </citation>
    <scope>NUCLEOTIDE SEQUENCE [GENOMIC DNA] OF 230-515</scope>
    <source>
        <tissue>Needle</tissue>
    </source>
</reference>
<geneLocation type="chloroplast"/>
<keyword id="KW-0150">Chloroplast</keyword>
<keyword id="KW-0507">mRNA processing</keyword>
<keyword id="KW-0934">Plastid</keyword>
<keyword id="KW-0694">RNA-binding</keyword>
<keyword id="KW-0819">tRNA processing</keyword>
<gene>
    <name evidence="1" type="primary">matK</name>
</gene>